<dbReference type="EMBL" id="AF151865">
    <property type="protein sequence ID" value="AAD34102.1"/>
    <property type="status" value="ALT_FRAME"/>
    <property type="molecule type" value="mRNA"/>
</dbReference>
<dbReference type="EMBL" id="AK002157">
    <property type="protein sequence ID" value="BAA92114.1"/>
    <property type="molecule type" value="mRNA"/>
</dbReference>
<dbReference type="EMBL" id="AK298135">
    <property type="protein sequence ID" value="BAG60414.1"/>
    <property type="molecule type" value="mRNA"/>
</dbReference>
<dbReference type="EMBL" id="AL109840">
    <property type="status" value="NOT_ANNOTATED_CDS"/>
    <property type="molecule type" value="Genomic_DNA"/>
</dbReference>
<dbReference type="EMBL" id="CH471077">
    <property type="protein sequence ID" value="EAW75442.1"/>
    <property type="molecule type" value="Genomic_DNA"/>
</dbReference>
<dbReference type="EMBL" id="CH471077">
    <property type="protein sequence ID" value="EAW75443.1"/>
    <property type="molecule type" value="Genomic_DNA"/>
</dbReference>
<dbReference type="EMBL" id="BC010649">
    <property type="protein sequence ID" value="AAH10649.1"/>
    <property type="molecule type" value="mRNA"/>
</dbReference>
<dbReference type="EMBL" id="BC013969">
    <property type="protein sequence ID" value="AAH13969.1"/>
    <property type="molecule type" value="mRNA"/>
</dbReference>
<dbReference type="CCDS" id="CCDS42893.1">
    <molecule id="Q9Y3B1-1"/>
</dbReference>
<dbReference type="CCDS" id="CCDS58783.1">
    <molecule id="Q9Y3B1-2"/>
</dbReference>
<dbReference type="RefSeq" id="NP_001243332.1">
    <molecule id="Q9Y3B1-2"/>
    <property type="nucleotide sequence ID" value="NM_001256403.2"/>
</dbReference>
<dbReference type="RefSeq" id="NP_057129.2">
    <molecule id="Q9Y3B1-1"/>
    <property type="nucleotide sequence ID" value="NM_016045.3"/>
</dbReference>
<dbReference type="PDB" id="6I4Y">
    <property type="method" value="X-ray"/>
    <property type="resolution" value="2.91 A"/>
    <property type="chains" value="B=1-194"/>
</dbReference>
<dbReference type="PDBsum" id="6I4Y"/>
<dbReference type="SMR" id="Q9Y3B1"/>
<dbReference type="BioGRID" id="119219">
    <property type="interactions" value="10"/>
</dbReference>
<dbReference type="FunCoup" id="Q9Y3B1">
    <property type="interactions" value="823"/>
</dbReference>
<dbReference type="IntAct" id="Q9Y3B1">
    <property type="interactions" value="22"/>
</dbReference>
<dbReference type="STRING" id="9606.ENSP00000348206"/>
<dbReference type="iPTMnet" id="Q9Y3B1"/>
<dbReference type="PhosphoSitePlus" id="Q9Y3B1"/>
<dbReference type="BioMuta" id="PRELID3B"/>
<dbReference type="DMDM" id="26392626"/>
<dbReference type="jPOST" id="Q9Y3B1"/>
<dbReference type="MassIVE" id="Q9Y3B1"/>
<dbReference type="PaxDb" id="9606-ENSP00000348206"/>
<dbReference type="PeptideAtlas" id="Q9Y3B1"/>
<dbReference type="ProteomicsDB" id="63414"/>
<dbReference type="ProteomicsDB" id="85999">
    <molecule id="Q9Y3B1-1"/>
</dbReference>
<dbReference type="Pumba" id="Q9Y3B1"/>
<dbReference type="Antibodypedia" id="44276">
    <property type="antibodies" value="106 antibodies from 16 providers"/>
</dbReference>
<dbReference type="DNASU" id="51012"/>
<dbReference type="Ensembl" id="ENST00000355937.9">
    <molecule id="Q9Y3B1-1"/>
    <property type="protein sequence ID" value="ENSP00000348206.4"/>
    <property type="gene ID" value="ENSG00000101166.16"/>
</dbReference>
<dbReference type="Ensembl" id="ENST00000371033.9">
    <molecule id="Q9Y3B1-2"/>
    <property type="protein sequence ID" value="ENSP00000360072.5"/>
    <property type="gene ID" value="ENSG00000101166.16"/>
</dbReference>
<dbReference type="GeneID" id="51012"/>
<dbReference type="KEGG" id="hsa:51012"/>
<dbReference type="MANE-Select" id="ENST00000355937.9">
    <property type="protein sequence ID" value="ENSP00000348206.4"/>
    <property type="RefSeq nucleotide sequence ID" value="NM_016045.3"/>
    <property type="RefSeq protein sequence ID" value="NP_057129.2"/>
</dbReference>
<dbReference type="UCSC" id="uc002yam.4">
    <molecule id="Q9Y3B1-1"/>
    <property type="organism name" value="human"/>
</dbReference>
<dbReference type="AGR" id="HGNC:15892"/>
<dbReference type="CTD" id="51012"/>
<dbReference type="DisGeNET" id="51012"/>
<dbReference type="GeneCards" id="PRELID3B"/>
<dbReference type="HGNC" id="HGNC:15892">
    <property type="gene designation" value="PRELID3B"/>
</dbReference>
<dbReference type="HPA" id="ENSG00000101166">
    <property type="expression patterns" value="Low tissue specificity"/>
</dbReference>
<dbReference type="MIM" id="620754">
    <property type="type" value="gene"/>
</dbReference>
<dbReference type="neXtProt" id="NX_Q9Y3B1"/>
<dbReference type="OpenTargets" id="ENSG00000101166"/>
<dbReference type="PharmGKB" id="PA162403922"/>
<dbReference type="VEuPathDB" id="HostDB:ENSG00000101166"/>
<dbReference type="eggNOG" id="KOG3336">
    <property type="taxonomic scope" value="Eukaryota"/>
</dbReference>
<dbReference type="GeneTree" id="ENSGT00950000182810"/>
<dbReference type="HOGENOM" id="CLU_067902_7_0_1"/>
<dbReference type="InParanoid" id="Q9Y3B1"/>
<dbReference type="OMA" id="YCPWNEK"/>
<dbReference type="OrthoDB" id="407630at2759"/>
<dbReference type="PAN-GO" id="Q9Y3B1">
    <property type="GO annotations" value="3 GO annotations based on evolutionary models"/>
</dbReference>
<dbReference type="PhylomeDB" id="Q9Y3B1"/>
<dbReference type="TreeFam" id="TF312873"/>
<dbReference type="PathwayCommons" id="Q9Y3B1"/>
<dbReference type="SignaLink" id="Q9Y3B1"/>
<dbReference type="BioGRID-ORCS" id="51012">
    <property type="hits" value="814 hits in 1143 CRISPR screens"/>
</dbReference>
<dbReference type="GenomeRNAi" id="51012"/>
<dbReference type="Pharos" id="Q9Y3B1">
    <property type="development level" value="Tbio"/>
</dbReference>
<dbReference type="PRO" id="PR:Q9Y3B1"/>
<dbReference type="Proteomes" id="UP000005640">
    <property type="component" value="Chromosome 20"/>
</dbReference>
<dbReference type="RNAct" id="Q9Y3B1">
    <property type="molecule type" value="protein"/>
</dbReference>
<dbReference type="Bgee" id="ENSG00000101166">
    <property type="expression patterns" value="Expressed in rectum and 196 other cell types or tissues"/>
</dbReference>
<dbReference type="ExpressionAtlas" id="Q9Y3B1">
    <property type="expression patterns" value="baseline and differential"/>
</dbReference>
<dbReference type="GO" id="GO:0005758">
    <property type="term" value="C:mitochondrial intermembrane space"/>
    <property type="evidence" value="ECO:0000318"/>
    <property type="project" value="GO_Central"/>
</dbReference>
<dbReference type="GO" id="GO:0005739">
    <property type="term" value="C:mitochondrion"/>
    <property type="evidence" value="ECO:0006056"/>
    <property type="project" value="FlyBase"/>
</dbReference>
<dbReference type="GO" id="GO:1990050">
    <property type="term" value="F:phosphatidic acid transfer activity"/>
    <property type="evidence" value="ECO:0000318"/>
    <property type="project" value="GO_Central"/>
</dbReference>
<dbReference type="GO" id="GO:0015914">
    <property type="term" value="P:phospholipid transport"/>
    <property type="evidence" value="ECO:0000318"/>
    <property type="project" value="GO_Central"/>
</dbReference>
<dbReference type="InterPro" id="IPR006797">
    <property type="entry name" value="PRELI/MSF1_dom"/>
</dbReference>
<dbReference type="InterPro" id="IPR037365">
    <property type="entry name" value="Slowmo/Ups"/>
</dbReference>
<dbReference type="PANTHER" id="PTHR11158">
    <property type="entry name" value="MSF1/PX19 RELATED"/>
    <property type="match status" value="1"/>
</dbReference>
<dbReference type="Pfam" id="PF04707">
    <property type="entry name" value="PRELI"/>
    <property type="match status" value="1"/>
</dbReference>
<dbReference type="PROSITE" id="PS50904">
    <property type="entry name" value="PRELI_MSF1"/>
    <property type="match status" value="1"/>
</dbReference>
<comment type="interaction">
    <interactant intactId="EBI-21825875">
        <id>Q9Y3B1</id>
    </interactant>
    <interactant intactId="EBI-2820212">
        <id>O43715</id>
        <label>TRIAP1</label>
    </interactant>
    <organismsDiffer>false</organismsDiffer>
    <experiments>7</experiments>
</comment>
<comment type="alternative products">
    <event type="alternative splicing"/>
    <isoform>
        <id>Q9Y3B1-1</id>
        <name>1</name>
        <sequence type="displayed"/>
    </isoform>
    <isoform>
        <id>Q9Y3B1-2</id>
        <name>2</name>
        <sequence type="described" ref="VSP_044840"/>
    </isoform>
</comment>
<comment type="similarity">
    <text evidence="4">Belongs to the slowmo family.</text>
</comment>
<comment type="sequence caution" evidence="4">
    <conflict type="frameshift">
        <sequence resource="EMBL-CDS" id="AAD34102"/>
    </conflict>
</comment>
<proteinExistence type="evidence at protein level"/>
<evidence type="ECO:0000250" key="1">
    <source>
        <dbReference type="UniProtKB" id="Q6P9U4"/>
    </source>
</evidence>
<evidence type="ECO:0000255" key="2">
    <source>
        <dbReference type="PROSITE-ProRule" id="PRU00158"/>
    </source>
</evidence>
<evidence type="ECO:0000303" key="3">
    <source>
    </source>
</evidence>
<evidence type="ECO:0000305" key="4"/>
<evidence type="ECO:0007829" key="5">
    <source>
        <dbReference type="PDB" id="6I4Y"/>
    </source>
</evidence>
<keyword id="KW-0002">3D-structure</keyword>
<keyword id="KW-0025">Alternative splicing</keyword>
<keyword id="KW-0597">Phosphoprotein</keyword>
<keyword id="KW-1267">Proteomics identification</keyword>
<keyword id="KW-1185">Reference proteome</keyword>
<accession>Q9Y3B1</accession>
<accession>E1P5I8</accession>
<accession>Q5JX17</accession>
<accession>Q9NUL0</accession>
<feature type="chain" id="PRO_0000079429" description="PRELI domain containing protein 3B">
    <location>
        <begin position="1"/>
        <end position="194"/>
    </location>
</feature>
<feature type="domain" description="PRELI/MSF1" evidence="2">
    <location>
        <begin position="1"/>
        <end position="172"/>
    </location>
</feature>
<feature type="modified residue" description="Phosphoserine" evidence="1">
    <location>
        <position position="46"/>
    </location>
</feature>
<feature type="modified residue" description="Phosphoserine" evidence="1">
    <location>
        <position position="51"/>
    </location>
</feature>
<feature type="splice variant" id="VSP_044840" description="In isoform 2." evidence="3">
    <location>
        <begin position="68"/>
        <end position="97"/>
    </location>
</feature>
<feature type="strand" evidence="5">
    <location>
        <begin position="3"/>
        <end position="12"/>
    </location>
</feature>
<feature type="helix" evidence="5">
    <location>
        <begin position="14"/>
        <end position="22"/>
    </location>
</feature>
<feature type="strand" evidence="5">
    <location>
        <begin position="33"/>
        <end position="43"/>
    </location>
</feature>
<feature type="strand" evidence="5">
    <location>
        <begin position="49"/>
        <end position="58"/>
    </location>
</feature>
<feature type="helix" evidence="5">
    <location>
        <begin position="65"/>
        <end position="71"/>
    </location>
</feature>
<feature type="strand" evidence="5">
    <location>
        <begin position="75"/>
        <end position="85"/>
    </location>
</feature>
<feature type="turn" evidence="5">
    <location>
        <begin position="86"/>
        <end position="89"/>
    </location>
</feature>
<feature type="strand" evidence="5">
    <location>
        <begin position="90"/>
        <end position="97"/>
    </location>
</feature>
<feature type="turn" evidence="5">
    <location>
        <begin position="99"/>
        <end position="103"/>
    </location>
</feature>
<feature type="strand" evidence="5">
    <location>
        <begin position="107"/>
        <end position="115"/>
    </location>
</feature>
<feature type="strand" evidence="5">
    <location>
        <begin position="118"/>
        <end position="129"/>
    </location>
</feature>
<feature type="strand" evidence="5">
    <location>
        <begin position="132"/>
        <end position="135"/>
    </location>
</feature>
<feature type="helix" evidence="5">
    <location>
        <begin position="137"/>
        <end position="170"/>
    </location>
</feature>
<protein>
    <recommendedName>
        <fullName>PRELI domain containing protein 3B</fullName>
    </recommendedName>
    <alternativeName>
        <fullName>Protein slowmo homolog 2</fullName>
    </alternativeName>
</protein>
<gene>
    <name type="primary">PRELID3B</name>
    <name type="synonym">C20orf45</name>
    <name type="synonym">SLMO2</name>
    <name type="ORF">CGI-107</name>
</gene>
<name>PLD3B_HUMAN</name>
<organism>
    <name type="scientific">Homo sapiens</name>
    <name type="common">Human</name>
    <dbReference type="NCBI Taxonomy" id="9606"/>
    <lineage>
        <taxon>Eukaryota</taxon>
        <taxon>Metazoa</taxon>
        <taxon>Chordata</taxon>
        <taxon>Craniata</taxon>
        <taxon>Vertebrata</taxon>
        <taxon>Euteleostomi</taxon>
        <taxon>Mammalia</taxon>
        <taxon>Eutheria</taxon>
        <taxon>Euarchontoglires</taxon>
        <taxon>Primates</taxon>
        <taxon>Haplorrhini</taxon>
        <taxon>Catarrhini</taxon>
        <taxon>Hominidae</taxon>
        <taxon>Homo</taxon>
    </lineage>
</organism>
<reference key="1">
    <citation type="journal article" date="2000" name="Genome Res.">
        <title>Identification of novel human genes evolutionarily conserved in Caenorhabditis elegans by comparative proteomics.</title>
        <authorList>
            <person name="Lai C.-H."/>
            <person name="Chou C.-Y."/>
            <person name="Ch'ang L.-Y."/>
            <person name="Liu C.-S."/>
            <person name="Lin W.-C."/>
        </authorList>
    </citation>
    <scope>NUCLEOTIDE SEQUENCE [LARGE SCALE MRNA] (ISOFORM 1)</scope>
</reference>
<reference key="2">
    <citation type="journal article" date="2004" name="Nat. Genet.">
        <title>Complete sequencing and characterization of 21,243 full-length human cDNAs.</title>
        <authorList>
            <person name="Ota T."/>
            <person name="Suzuki Y."/>
            <person name="Nishikawa T."/>
            <person name="Otsuki T."/>
            <person name="Sugiyama T."/>
            <person name="Irie R."/>
            <person name="Wakamatsu A."/>
            <person name="Hayashi K."/>
            <person name="Sato H."/>
            <person name="Nagai K."/>
            <person name="Kimura K."/>
            <person name="Makita H."/>
            <person name="Sekine M."/>
            <person name="Obayashi M."/>
            <person name="Nishi T."/>
            <person name="Shibahara T."/>
            <person name="Tanaka T."/>
            <person name="Ishii S."/>
            <person name="Yamamoto J."/>
            <person name="Saito K."/>
            <person name="Kawai Y."/>
            <person name="Isono Y."/>
            <person name="Nakamura Y."/>
            <person name="Nagahari K."/>
            <person name="Murakami K."/>
            <person name="Yasuda T."/>
            <person name="Iwayanagi T."/>
            <person name="Wagatsuma M."/>
            <person name="Shiratori A."/>
            <person name="Sudo H."/>
            <person name="Hosoiri T."/>
            <person name="Kaku Y."/>
            <person name="Kodaira H."/>
            <person name="Kondo H."/>
            <person name="Sugawara M."/>
            <person name="Takahashi M."/>
            <person name="Kanda K."/>
            <person name="Yokoi T."/>
            <person name="Furuya T."/>
            <person name="Kikkawa E."/>
            <person name="Omura Y."/>
            <person name="Abe K."/>
            <person name="Kamihara K."/>
            <person name="Katsuta N."/>
            <person name="Sato K."/>
            <person name="Tanikawa M."/>
            <person name="Yamazaki M."/>
            <person name="Ninomiya K."/>
            <person name="Ishibashi T."/>
            <person name="Yamashita H."/>
            <person name="Murakawa K."/>
            <person name="Fujimori K."/>
            <person name="Tanai H."/>
            <person name="Kimata M."/>
            <person name="Watanabe M."/>
            <person name="Hiraoka S."/>
            <person name="Chiba Y."/>
            <person name="Ishida S."/>
            <person name="Ono Y."/>
            <person name="Takiguchi S."/>
            <person name="Watanabe S."/>
            <person name="Yosida M."/>
            <person name="Hotuta T."/>
            <person name="Kusano J."/>
            <person name="Kanehori K."/>
            <person name="Takahashi-Fujii A."/>
            <person name="Hara H."/>
            <person name="Tanase T.-O."/>
            <person name="Nomura Y."/>
            <person name="Togiya S."/>
            <person name="Komai F."/>
            <person name="Hara R."/>
            <person name="Takeuchi K."/>
            <person name="Arita M."/>
            <person name="Imose N."/>
            <person name="Musashino K."/>
            <person name="Yuuki H."/>
            <person name="Oshima A."/>
            <person name="Sasaki N."/>
            <person name="Aotsuka S."/>
            <person name="Yoshikawa Y."/>
            <person name="Matsunawa H."/>
            <person name="Ichihara T."/>
            <person name="Shiohata N."/>
            <person name="Sano S."/>
            <person name="Moriya S."/>
            <person name="Momiyama H."/>
            <person name="Satoh N."/>
            <person name="Takami S."/>
            <person name="Terashima Y."/>
            <person name="Suzuki O."/>
            <person name="Nakagawa S."/>
            <person name="Senoh A."/>
            <person name="Mizoguchi H."/>
            <person name="Goto Y."/>
            <person name="Shimizu F."/>
            <person name="Wakebe H."/>
            <person name="Hishigaki H."/>
            <person name="Watanabe T."/>
            <person name="Sugiyama A."/>
            <person name="Takemoto M."/>
            <person name="Kawakami B."/>
            <person name="Yamazaki M."/>
            <person name="Watanabe K."/>
            <person name="Kumagai A."/>
            <person name="Itakura S."/>
            <person name="Fukuzumi Y."/>
            <person name="Fujimori Y."/>
            <person name="Komiyama M."/>
            <person name="Tashiro H."/>
            <person name="Tanigami A."/>
            <person name="Fujiwara T."/>
            <person name="Ono T."/>
            <person name="Yamada K."/>
            <person name="Fujii Y."/>
            <person name="Ozaki K."/>
            <person name="Hirao M."/>
            <person name="Ohmori Y."/>
            <person name="Kawabata A."/>
            <person name="Hikiji T."/>
            <person name="Kobatake N."/>
            <person name="Inagaki H."/>
            <person name="Ikema Y."/>
            <person name="Okamoto S."/>
            <person name="Okitani R."/>
            <person name="Kawakami T."/>
            <person name="Noguchi S."/>
            <person name="Itoh T."/>
            <person name="Shigeta K."/>
            <person name="Senba T."/>
            <person name="Matsumura K."/>
            <person name="Nakajima Y."/>
            <person name="Mizuno T."/>
            <person name="Morinaga M."/>
            <person name="Sasaki M."/>
            <person name="Togashi T."/>
            <person name="Oyama M."/>
            <person name="Hata H."/>
            <person name="Watanabe M."/>
            <person name="Komatsu T."/>
            <person name="Mizushima-Sugano J."/>
            <person name="Satoh T."/>
            <person name="Shirai Y."/>
            <person name="Takahashi Y."/>
            <person name="Nakagawa K."/>
            <person name="Okumura K."/>
            <person name="Nagase T."/>
            <person name="Nomura N."/>
            <person name="Kikuchi H."/>
            <person name="Masuho Y."/>
            <person name="Yamashita R."/>
            <person name="Nakai K."/>
            <person name="Yada T."/>
            <person name="Nakamura Y."/>
            <person name="Ohara O."/>
            <person name="Isogai T."/>
            <person name="Sugano S."/>
        </authorList>
    </citation>
    <scope>NUCLEOTIDE SEQUENCE [LARGE SCALE MRNA] (ISOFORMS 1 AND 2)</scope>
    <source>
        <tissue>Placenta</tissue>
    </source>
</reference>
<reference key="3">
    <citation type="journal article" date="2001" name="Nature">
        <title>The DNA sequence and comparative analysis of human chromosome 20.</title>
        <authorList>
            <person name="Deloukas P."/>
            <person name="Matthews L.H."/>
            <person name="Ashurst J.L."/>
            <person name="Burton J."/>
            <person name="Gilbert J.G.R."/>
            <person name="Jones M."/>
            <person name="Stavrides G."/>
            <person name="Almeida J.P."/>
            <person name="Babbage A.K."/>
            <person name="Bagguley C.L."/>
            <person name="Bailey J."/>
            <person name="Barlow K.F."/>
            <person name="Bates K.N."/>
            <person name="Beard L.M."/>
            <person name="Beare D.M."/>
            <person name="Beasley O.P."/>
            <person name="Bird C.P."/>
            <person name="Blakey S.E."/>
            <person name="Bridgeman A.M."/>
            <person name="Brown A.J."/>
            <person name="Buck D."/>
            <person name="Burrill W.D."/>
            <person name="Butler A.P."/>
            <person name="Carder C."/>
            <person name="Carter N.P."/>
            <person name="Chapman J.C."/>
            <person name="Clamp M."/>
            <person name="Clark G."/>
            <person name="Clark L.N."/>
            <person name="Clark S.Y."/>
            <person name="Clee C.M."/>
            <person name="Clegg S."/>
            <person name="Cobley V.E."/>
            <person name="Collier R.E."/>
            <person name="Connor R.E."/>
            <person name="Corby N.R."/>
            <person name="Coulson A."/>
            <person name="Coville G.J."/>
            <person name="Deadman R."/>
            <person name="Dhami P.D."/>
            <person name="Dunn M."/>
            <person name="Ellington A.G."/>
            <person name="Frankland J.A."/>
            <person name="Fraser A."/>
            <person name="French L."/>
            <person name="Garner P."/>
            <person name="Grafham D.V."/>
            <person name="Griffiths C."/>
            <person name="Griffiths M.N.D."/>
            <person name="Gwilliam R."/>
            <person name="Hall R.E."/>
            <person name="Hammond S."/>
            <person name="Harley J.L."/>
            <person name="Heath P.D."/>
            <person name="Ho S."/>
            <person name="Holden J.L."/>
            <person name="Howden P.J."/>
            <person name="Huckle E."/>
            <person name="Hunt A.R."/>
            <person name="Hunt S.E."/>
            <person name="Jekosch K."/>
            <person name="Johnson C.M."/>
            <person name="Johnson D."/>
            <person name="Kay M.P."/>
            <person name="Kimberley A.M."/>
            <person name="King A."/>
            <person name="Knights A."/>
            <person name="Laird G.K."/>
            <person name="Lawlor S."/>
            <person name="Lehvaeslaiho M.H."/>
            <person name="Leversha M.A."/>
            <person name="Lloyd C."/>
            <person name="Lloyd D.M."/>
            <person name="Lovell J.D."/>
            <person name="Marsh V.L."/>
            <person name="Martin S.L."/>
            <person name="McConnachie L.J."/>
            <person name="McLay K."/>
            <person name="McMurray A.A."/>
            <person name="Milne S.A."/>
            <person name="Mistry D."/>
            <person name="Moore M.J.F."/>
            <person name="Mullikin J.C."/>
            <person name="Nickerson T."/>
            <person name="Oliver K."/>
            <person name="Parker A."/>
            <person name="Patel R."/>
            <person name="Pearce T.A.V."/>
            <person name="Peck A.I."/>
            <person name="Phillimore B.J.C.T."/>
            <person name="Prathalingam S.R."/>
            <person name="Plumb R.W."/>
            <person name="Ramsay H."/>
            <person name="Rice C.M."/>
            <person name="Ross M.T."/>
            <person name="Scott C.E."/>
            <person name="Sehra H.K."/>
            <person name="Shownkeen R."/>
            <person name="Sims S."/>
            <person name="Skuce C.D."/>
            <person name="Smith M.L."/>
            <person name="Soderlund C."/>
            <person name="Steward C.A."/>
            <person name="Sulston J.E."/>
            <person name="Swann R.M."/>
            <person name="Sycamore N."/>
            <person name="Taylor R."/>
            <person name="Tee L."/>
            <person name="Thomas D.W."/>
            <person name="Thorpe A."/>
            <person name="Tracey A."/>
            <person name="Tromans A.C."/>
            <person name="Vaudin M."/>
            <person name="Wall M."/>
            <person name="Wallis J.M."/>
            <person name="Whitehead S.L."/>
            <person name="Whittaker P."/>
            <person name="Willey D.L."/>
            <person name="Williams L."/>
            <person name="Williams S.A."/>
            <person name="Wilming L."/>
            <person name="Wray P.W."/>
            <person name="Hubbard T."/>
            <person name="Durbin R.M."/>
            <person name="Bentley D.R."/>
            <person name="Beck S."/>
            <person name="Rogers J."/>
        </authorList>
    </citation>
    <scope>NUCLEOTIDE SEQUENCE [LARGE SCALE GENOMIC DNA]</scope>
</reference>
<reference key="4">
    <citation type="submission" date="2005-09" db="EMBL/GenBank/DDBJ databases">
        <authorList>
            <person name="Mural R.J."/>
            <person name="Istrail S."/>
            <person name="Sutton G.G."/>
            <person name="Florea L."/>
            <person name="Halpern A.L."/>
            <person name="Mobarry C.M."/>
            <person name="Lippert R."/>
            <person name="Walenz B."/>
            <person name="Shatkay H."/>
            <person name="Dew I."/>
            <person name="Miller J.R."/>
            <person name="Flanigan M.J."/>
            <person name="Edwards N.J."/>
            <person name="Bolanos R."/>
            <person name="Fasulo D."/>
            <person name="Halldorsson B.V."/>
            <person name="Hannenhalli S."/>
            <person name="Turner R."/>
            <person name="Yooseph S."/>
            <person name="Lu F."/>
            <person name="Nusskern D.R."/>
            <person name="Shue B.C."/>
            <person name="Zheng X.H."/>
            <person name="Zhong F."/>
            <person name="Delcher A.L."/>
            <person name="Huson D.H."/>
            <person name="Kravitz S.A."/>
            <person name="Mouchard L."/>
            <person name="Reinert K."/>
            <person name="Remington K.A."/>
            <person name="Clark A.G."/>
            <person name="Waterman M.S."/>
            <person name="Eichler E.E."/>
            <person name="Adams M.D."/>
            <person name="Hunkapiller M.W."/>
            <person name="Myers E.W."/>
            <person name="Venter J.C."/>
        </authorList>
    </citation>
    <scope>NUCLEOTIDE SEQUENCE [LARGE SCALE GENOMIC DNA]</scope>
</reference>
<reference key="5">
    <citation type="journal article" date="2004" name="Genome Res.">
        <title>The status, quality, and expansion of the NIH full-length cDNA project: the Mammalian Gene Collection (MGC).</title>
        <authorList>
            <consortium name="The MGC Project Team"/>
        </authorList>
    </citation>
    <scope>NUCLEOTIDE SEQUENCE [LARGE SCALE MRNA] (ISOFORM 1)</scope>
    <source>
        <tissue>Eye</tissue>
        <tissue>Uterus</tissue>
    </source>
</reference>
<sequence>MKIWTSEHVFDHPWETVTTAAMQKYPNPMNPSVVGVDVLDRHIDPSGKLHSHRLLSTEWGLPSIVKSLIGAARTKTYVQEHSVVDPVEKTMELKSTNISFTNMVSVDERLIYKPHPQDPEKTVLTQEAIITVKGVSLSSYLEGLMASTISSNASKGREAMEWVIHKLNAEIEELTASARGTIRTPMAAAAFAEK</sequence>